<accession>P0DTH1</accession>
<organism>
    <name type="scientific">Diceros bicornis minor</name>
    <name type="common">South-central black rhinoceros</name>
    <dbReference type="NCBI Taxonomy" id="77932"/>
    <lineage>
        <taxon>Eukaryota</taxon>
        <taxon>Metazoa</taxon>
        <taxon>Chordata</taxon>
        <taxon>Craniata</taxon>
        <taxon>Vertebrata</taxon>
        <taxon>Euteleostomi</taxon>
        <taxon>Mammalia</taxon>
        <taxon>Eutheria</taxon>
        <taxon>Laurasiatheria</taxon>
        <taxon>Perissodactyla</taxon>
        <taxon>Rhinocerotidae</taxon>
        <taxon>Diceros</taxon>
    </lineage>
</organism>
<comment type="function">
    <text evidence="1">May participate in lipoprotein metabolism.</text>
</comment>
<comment type="subcellular location">
    <subcellularLocation>
        <location evidence="1">Secreted</location>
    </subcellularLocation>
</comment>
<comment type="similarity">
    <text evidence="3">Belongs to the apolipoprotein C4 family.</text>
</comment>
<feature type="signal peptide" evidence="2">
    <location>
        <begin position="1"/>
        <end position="27"/>
    </location>
</feature>
<feature type="chain" id="PRO_0000452521" description="Apolipoprotein C-IV">
    <location>
        <begin position="28"/>
        <end position="127"/>
    </location>
</feature>
<keyword id="KW-0445">Lipid transport</keyword>
<keyword id="KW-1185">Reference proteome</keyword>
<keyword id="KW-0964">Secreted</keyword>
<keyword id="KW-0732">Signal</keyword>
<keyword id="KW-0813">Transport</keyword>
<proteinExistence type="inferred from homology"/>
<evidence type="ECO:0000250" key="1"/>
<evidence type="ECO:0000255" key="2"/>
<evidence type="ECO:0000305" key="3"/>
<reference key="1">
    <citation type="journal article" date="2020" name="Mol. Biol. Evol.">
        <title>Interspecific Gene Flow and the Evolution of Specialization in Black and White Rhinoceros.</title>
        <authorList>
            <person name="Moodley Y."/>
            <person name="Westbury M.V."/>
            <person name="Russo I.M."/>
            <person name="Gopalakrishnan S."/>
            <person name="Rakotoarivelo A."/>
            <person name="Olsen R.A."/>
            <person name="Prost S."/>
            <person name="Tunstall T."/>
            <person name="Ryder O.A."/>
            <person name="Dalen L."/>
            <person name="Bruford M.W."/>
        </authorList>
    </citation>
    <scope>NUCLEOTIDE SEQUENCE [LARGE SCALE GENOMIC DNA]</scope>
</reference>
<reference key="2">
    <citation type="unpublished observations" date="2021-01">
        <authorList>
            <person name="Puppione D.L."/>
        </authorList>
    </citation>
    <scope>IDENTIFICATION</scope>
</reference>
<sequence>MSLPGRRPWALPSFCIYVLVLAWVVACQQEVPTGSPSPPPGRASGLWGLVRGKVKEFMEPLVTKTRERWRWFWGPSAFRDFMQTYYDDHLRDLRPRAQAWLRSSKESLLNKAYNMCPQLLCGDGDQG</sequence>
<name>APOC4_DICBM</name>
<gene>
    <name type="primary">APOC4</name>
</gene>
<dbReference type="EMBL" id="JACDTQ010001714">
    <property type="status" value="NOT_ANNOTATED_CDS"/>
    <property type="molecule type" value="Genomic_DNA"/>
</dbReference>
<dbReference type="RefSeq" id="XP_058386967.1">
    <property type="nucleotide sequence ID" value="XM_058530984.1"/>
</dbReference>
<dbReference type="GeneID" id="131397871"/>
<dbReference type="OrthoDB" id="9449255at2759"/>
<dbReference type="Proteomes" id="UP000551758">
    <property type="component" value="Unassembled WGS sequence"/>
</dbReference>
<dbReference type="GO" id="GO:0034364">
    <property type="term" value="C:high-density lipoprotein particle"/>
    <property type="evidence" value="ECO:0007669"/>
    <property type="project" value="TreeGrafter"/>
</dbReference>
<dbReference type="GO" id="GO:0034361">
    <property type="term" value="C:very-low-density lipoprotein particle"/>
    <property type="evidence" value="ECO:0007669"/>
    <property type="project" value="TreeGrafter"/>
</dbReference>
<dbReference type="GO" id="GO:0006869">
    <property type="term" value="P:lipid transport"/>
    <property type="evidence" value="ECO:0007669"/>
    <property type="project" value="UniProtKB-KW"/>
</dbReference>
<dbReference type="GO" id="GO:0010890">
    <property type="term" value="P:positive regulation of triglyceride storage"/>
    <property type="evidence" value="ECO:0007669"/>
    <property type="project" value="TreeGrafter"/>
</dbReference>
<dbReference type="GO" id="GO:0070328">
    <property type="term" value="P:triglyceride homeostasis"/>
    <property type="evidence" value="ECO:0007669"/>
    <property type="project" value="TreeGrafter"/>
</dbReference>
<dbReference type="InterPro" id="IPR028120">
    <property type="entry name" value="APOC4"/>
</dbReference>
<dbReference type="PANTHER" id="PTHR32288">
    <property type="entry name" value="APOLIPOPROTEIN C-IV"/>
    <property type="match status" value="1"/>
</dbReference>
<dbReference type="PANTHER" id="PTHR32288:SF0">
    <property type="entry name" value="APOLIPOPROTEIN C-IV"/>
    <property type="match status" value="1"/>
</dbReference>
<dbReference type="Pfam" id="PF15119">
    <property type="entry name" value="APOC4"/>
    <property type="match status" value="1"/>
</dbReference>
<protein>
    <recommendedName>
        <fullName>Apolipoprotein C-IV</fullName>
        <shortName>Apo-CIV</shortName>
        <shortName>ApoC-IV</shortName>
    </recommendedName>
    <alternativeName>
        <fullName>Apolipoprotein C4</fullName>
    </alternativeName>
</protein>